<accession>P56228</accession>
<protein>
    <recommendedName>
        <fullName>Caerin-1.3</fullName>
    </recommendedName>
</protein>
<sequence length="25" mass="2585">GLLSVLGSVAQHVLPHVVPVIAEHL</sequence>
<keyword id="KW-0027">Amidation</keyword>
<keyword id="KW-0878">Amphibian defense peptide</keyword>
<keyword id="KW-0044">Antibiotic</keyword>
<keyword id="KW-0929">Antimicrobial</keyword>
<keyword id="KW-0903">Direct protein sequencing</keyword>
<keyword id="KW-0964">Secreted</keyword>
<organism>
    <name type="scientific">Ranoidea caerulea</name>
    <name type="common">Green tree frog</name>
    <name type="synonym">Litoria caerulea</name>
    <dbReference type="NCBI Taxonomy" id="30344"/>
    <lineage>
        <taxon>Eukaryota</taxon>
        <taxon>Metazoa</taxon>
        <taxon>Chordata</taxon>
        <taxon>Craniata</taxon>
        <taxon>Vertebrata</taxon>
        <taxon>Euteleostomi</taxon>
        <taxon>Amphibia</taxon>
        <taxon>Batrachia</taxon>
        <taxon>Anura</taxon>
        <taxon>Neobatrachia</taxon>
        <taxon>Hyloidea</taxon>
        <taxon>Hylidae</taxon>
        <taxon>Pelodryadinae</taxon>
        <taxon>Ranoidea</taxon>
    </lineage>
</organism>
<proteinExistence type="evidence at protein level"/>
<reference key="1">
    <citation type="journal article" date="1993" name="J. Chem. Res.">
        <title>Peptides from Australian frogs. The structures of the caerins from Litoria caerula.</title>
        <authorList>
            <person name="Stone D.J.M."/>
            <person name="Waugh R.J."/>
            <person name="Bowie J.H."/>
            <person name="Wallace J.C."/>
            <person name="Tyler M.J."/>
        </authorList>
    </citation>
    <scope>PROTEIN SEQUENCE</scope>
    <scope>MASS SPECTROMETRY</scope>
    <source>
        <tissue>Parotoid gland</tissue>
    </source>
</reference>
<name>CR13_RANCA</name>
<dbReference type="SMR" id="P56228"/>
<dbReference type="GO" id="GO:0005576">
    <property type="term" value="C:extracellular region"/>
    <property type="evidence" value="ECO:0007669"/>
    <property type="project" value="UniProtKB-SubCell"/>
</dbReference>
<dbReference type="GO" id="GO:0042742">
    <property type="term" value="P:defense response to bacterium"/>
    <property type="evidence" value="ECO:0007669"/>
    <property type="project" value="UniProtKB-KW"/>
</dbReference>
<dbReference type="InterPro" id="IPR010000">
    <property type="entry name" value="Caerin_1"/>
</dbReference>
<dbReference type="Pfam" id="PF07440">
    <property type="entry name" value="Caerin_1"/>
    <property type="match status" value="1"/>
</dbReference>
<comment type="function">
    <text>Antibacterial peptide, that adopts an alpha helical conformation which can disrupt bacterial membranes. Each caerin displays a different antimicrobial specificity.</text>
</comment>
<comment type="subcellular location">
    <subcellularLocation>
        <location>Secreted</location>
    </subcellularLocation>
</comment>
<comment type="tissue specificity">
    <text>Expressed by the skin parotoid and/or rostral glands.</text>
</comment>
<comment type="domain">
    <text evidence="1">Contains two amphipathic alpha helix regions separated by a region of less-defined helicity and greater flexibility.</text>
</comment>
<comment type="mass spectrometry" mass="2582.0" method="FAB" evidence="3"/>
<comment type="similarity">
    <text evidence="4">Belongs to the frog skin active peptide (FSAP) family. Caerin subfamily.</text>
</comment>
<feature type="peptide" id="PRO_0000043737" description="Caerin-1.3">
    <location>
        <begin position="1"/>
        <end position="25"/>
    </location>
</feature>
<feature type="modified residue" description="Leucine amide" evidence="2">
    <location>
        <position position="25"/>
    </location>
</feature>
<evidence type="ECO:0000250" key="1"/>
<evidence type="ECO:0000250" key="2">
    <source>
        <dbReference type="UniProtKB" id="Q800R2"/>
    </source>
</evidence>
<evidence type="ECO:0000269" key="3">
    <source ref="1"/>
</evidence>
<evidence type="ECO:0000305" key="4"/>